<evidence type="ECO:0000255" key="1">
    <source>
        <dbReference type="HAMAP-Rule" id="MF_02006"/>
    </source>
</evidence>
<name>SYY_RICPR</name>
<organism>
    <name type="scientific">Rickettsia prowazekii (strain Madrid E)</name>
    <dbReference type="NCBI Taxonomy" id="272947"/>
    <lineage>
        <taxon>Bacteria</taxon>
        <taxon>Pseudomonadati</taxon>
        <taxon>Pseudomonadota</taxon>
        <taxon>Alphaproteobacteria</taxon>
        <taxon>Rickettsiales</taxon>
        <taxon>Rickettsiaceae</taxon>
        <taxon>Rickettsieae</taxon>
        <taxon>Rickettsia</taxon>
        <taxon>typhus group</taxon>
    </lineage>
</organism>
<sequence>MTFIEEFIYKGYLNQCTDLARLSAITQEAKIAAYIGFDCTATSLHIGSLMQIMILRLLQKHGHTPIVIIGGGTSKIGDPAGKDVTRKALTQEDIKRNAEGIKKSLSKFIKFGKDQGDAIILDNAEWLDSLNYLDFLRDFGSYFSVNRMLTMDSVKLRLDRSHHLSFLELNYMLLQSYDFYYLSKNYNCILQLGGSDQWGNIVIGADLIRKISGKEVFGMTTPLLTTASGAKMGKTAAGAVWLNEDLLSPYDYYQYWRNCEDADVMRFAKLYSELDIVELNKFESLVSEDINAAKKQLAYELTKLCHGERLAKLALETAVKIFEQGDIDENLHTFILAPEILQSGISAYNLFYNANLARSKSEARKIIRGKGAKINDQLVEDENMTIDTNFLRNRKVIKLSVGKKRHILVKV</sequence>
<reference key="1">
    <citation type="journal article" date="1998" name="Nature">
        <title>The genome sequence of Rickettsia prowazekii and the origin of mitochondria.</title>
        <authorList>
            <person name="Andersson S.G.E."/>
            <person name="Zomorodipour A."/>
            <person name="Andersson J.O."/>
            <person name="Sicheritz-Ponten T."/>
            <person name="Alsmark U.C.M."/>
            <person name="Podowski R.M."/>
            <person name="Naeslund A.K."/>
            <person name="Eriksson A.-S."/>
            <person name="Winkler H.H."/>
            <person name="Kurland C.G."/>
        </authorList>
    </citation>
    <scope>NUCLEOTIDE SEQUENCE [LARGE SCALE GENOMIC DNA]</scope>
    <source>
        <strain>Madrid E</strain>
    </source>
</reference>
<comment type="function">
    <text evidence="1">Catalyzes the attachment of tyrosine to tRNA(Tyr) in a two-step reaction: tyrosine is first activated by ATP to form Tyr-AMP and then transferred to the acceptor end of tRNA(Tyr).</text>
</comment>
<comment type="catalytic activity">
    <reaction evidence="1">
        <text>tRNA(Tyr) + L-tyrosine + ATP = L-tyrosyl-tRNA(Tyr) + AMP + diphosphate + H(+)</text>
        <dbReference type="Rhea" id="RHEA:10220"/>
        <dbReference type="Rhea" id="RHEA-COMP:9706"/>
        <dbReference type="Rhea" id="RHEA-COMP:9707"/>
        <dbReference type="ChEBI" id="CHEBI:15378"/>
        <dbReference type="ChEBI" id="CHEBI:30616"/>
        <dbReference type="ChEBI" id="CHEBI:33019"/>
        <dbReference type="ChEBI" id="CHEBI:58315"/>
        <dbReference type="ChEBI" id="CHEBI:78442"/>
        <dbReference type="ChEBI" id="CHEBI:78536"/>
        <dbReference type="ChEBI" id="CHEBI:456215"/>
        <dbReference type="EC" id="6.1.1.1"/>
    </reaction>
</comment>
<comment type="subunit">
    <text evidence="1">Homodimer.</text>
</comment>
<comment type="subcellular location">
    <subcellularLocation>
        <location evidence="1">Cytoplasm</location>
    </subcellularLocation>
</comment>
<comment type="similarity">
    <text evidence="1">Belongs to the class-I aminoacyl-tRNA synthetase family. TyrS type 1 subfamily.</text>
</comment>
<feature type="chain" id="PRO_0000055663" description="Tyrosine--tRNA ligase">
    <location>
        <begin position="1"/>
        <end position="411"/>
    </location>
</feature>
<feature type="domain" description="S4 RNA-binding" evidence="1">
    <location>
        <begin position="345"/>
        <end position="411"/>
    </location>
</feature>
<feature type="short sequence motif" description="'HIGH' region">
    <location>
        <begin position="39"/>
        <end position="48"/>
    </location>
</feature>
<feature type="short sequence motif" description="'KMSKS' region">
    <location>
        <begin position="231"/>
        <end position="235"/>
    </location>
</feature>
<feature type="binding site" evidence="1">
    <location>
        <position position="34"/>
    </location>
    <ligand>
        <name>L-tyrosine</name>
        <dbReference type="ChEBI" id="CHEBI:58315"/>
    </ligand>
</feature>
<feature type="binding site" evidence="1">
    <location>
        <position position="171"/>
    </location>
    <ligand>
        <name>L-tyrosine</name>
        <dbReference type="ChEBI" id="CHEBI:58315"/>
    </ligand>
</feature>
<feature type="binding site" evidence="1">
    <location>
        <position position="175"/>
    </location>
    <ligand>
        <name>L-tyrosine</name>
        <dbReference type="ChEBI" id="CHEBI:58315"/>
    </ligand>
</feature>
<feature type="binding site" evidence="1">
    <location>
        <position position="234"/>
    </location>
    <ligand>
        <name>ATP</name>
        <dbReference type="ChEBI" id="CHEBI:30616"/>
    </ligand>
</feature>
<gene>
    <name evidence="1" type="primary">tyrS</name>
    <name type="ordered locus">RP556</name>
</gene>
<dbReference type="EC" id="6.1.1.1" evidence="1"/>
<dbReference type="EMBL" id="AJ235272">
    <property type="protein sequence ID" value="CAA15005.1"/>
    <property type="molecule type" value="Genomic_DNA"/>
</dbReference>
<dbReference type="PIR" id="C71660">
    <property type="entry name" value="C71660"/>
</dbReference>
<dbReference type="RefSeq" id="NP_220928.1">
    <property type="nucleotide sequence ID" value="NC_000963.1"/>
</dbReference>
<dbReference type="RefSeq" id="WP_004597849.1">
    <property type="nucleotide sequence ID" value="NC_000963.1"/>
</dbReference>
<dbReference type="SMR" id="Q9ZCZ4"/>
<dbReference type="STRING" id="272947.gene:17555636"/>
<dbReference type="EnsemblBacteria" id="CAA15005">
    <property type="protein sequence ID" value="CAA15005"/>
    <property type="gene ID" value="CAA15005"/>
</dbReference>
<dbReference type="GeneID" id="57569679"/>
<dbReference type="KEGG" id="rpr:RP556"/>
<dbReference type="PATRIC" id="fig|272947.5.peg.570"/>
<dbReference type="eggNOG" id="COG0162">
    <property type="taxonomic scope" value="Bacteria"/>
</dbReference>
<dbReference type="HOGENOM" id="CLU_024003_0_3_5"/>
<dbReference type="OrthoDB" id="9804243at2"/>
<dbReference type="Proteomes" id="UP000002480">
    <property type="component" value="Chromosome"/>
</dbReference>
<dbReference type="GO" id="GO:0005829">
    <property type="term" value="C:cytosol"/>
    <property type="evidence" value="ECO:0007669"/>
    <property type="project" value="TreeGrafter"/>
</dbReference>
<dbReference type="GO" id="GO:0005524">
    <property type="term" value="F:ATP binding"/>
    <property type="evidence" value="ECO:0007669"/>
    <property type="project" value="UniProtKB-UniRule"/>
</dbReference>
<dbReference type="GO" id="GO:0003723">
    <property type="term" value="F:RNA binding"/>
    <property type="evidence" value="ECO:0007669"/>
    <property type="project" value="UniProtKB-KW"/>
</dbReference>
<dbReference type="GO" id="GO:0004831">
    <property type="term" value="F:tyrosine-tRNA ligase activity"/>
    <property type="evidence" value="ECO:0007669"/>
    <property type="project" value="UniProtKB-UniRule"/>
</dbReference>
<dbReference type="GO" id="GO:0006437">
    <property type="term" value="P:tyrosyl-tRNA aminoacylation"/>
    <property type="evidence" value="ECO:0007669"/>
    <property type="project" value="UniProtKB-UniRule"/>
</dbReference>
<dbReference type="CDD" id="cd00165">
    <property type="entry name" value="S4"/>
    <property type="match status" value="1"/>
</dbReference>
<dbReference type="CDD" id="cd00805">
    <property type="entry name" value="TyrRS_core"/>
    <property type="match status" value="1"/>
</dbReference>
<dbReference type="Gene3D" id="3.40.50.620">
    <property type="entry name" value="HUPs"/>
    <property type="match status" value="1"/>
</dbReference>
<dbReference type="Gene3D" id="3.10.290.10">
    <property type="entry name" value="RNA-binding S4 domain"/>
    <property type="match status" value="1"/>
</dbReference>
<dbReference type="Gene3D" id="1.10.240.10">
    <property type="entry name" value="Tyrosyl-Transfer RNA Synthetase"/>
    <property type="match status" value="1"/>
</dbReference>
<dbReference type="HAMAP" id="MF_02006">
    <property type="entry name" value="Tyr_tRNA_synth_type1"/>
    <property type="match status" value="1"/>
</dbReference>
<dbReference type="InterPro" id="IPR002305">
    <property type="entry name" value="aa-tRNA-synth_Ic"/>
</dbReference>
<dbReference type="InterPro" id="IPR014729">
    <property type="entry name" value="Rossmann-like_a/b/a_fold"/>
</dbReference>
<dbReference type="InterPro" id="IPR036986">
    <property type="entry name" value="S4_RNA-bd_sf"/>
</dbReference>
<dbReference type="InterPro" id="IPR002307">
    <property type="entry name" value="Tyr-tRNA-ligase"/>
</dbReference>
<dbReference type="InterPro" id="IPR024088">
    <property type="entry name" value="Tyr-tRNA-ligase_bac-type"/>
</dbReference>
<dbReference type="InterPro" id="IPR024107">
    <property type="entry name" value="Tyr-tRNA-ligase_bac_1"/>
</dbReference>
<dbReference type="NCBIfam" id="TIGR00234">
    <property type="entry name" value="tyrS"/>
    <property type="match status" value="1"/>
</dbReference>
<dbReference type="PANTHER" id="PTHR11766:SF0">
    <property type="entry name" value="TYROSINE--TRNA LIGASE, MITOCHONDRIAL"/>
    <property type="match status" value="1"/>
</dbReference>
<dbReference type="PANTHER" id="PTHR11766">
    <property type="entry name" value="TYROSYL-TRNA SYNTHETASE"/>
    <property type="match status" value="1"/>
</dbReference>
<dbReference type="Pfam" id="PF00579">
    <property type="entry name" value="tRNA-synt_1b"/>
    <property type="match status" value="1"/>
</dbReference>
<dbReference type="PRINTS" id="PR01040">
    <property type="entry name" value="TRNASYNTHTYR"/>
</dbReference>
<dbReference type="SUPFAM" id="SSF55174">
    <property type="entry name" value="Alpha-L RNA-binding motif"/>
    <property type="match status" value="1"/>
</dbReference>
<dbReference type="SUPFAM" id="SSF52374">
    <property type="entry name" value="Nucleotidylyl transferase"/>
    <property type="match status" value="1"/>
</dbReference>
<dbReference type="PROSITE" id="PS50889">
    <property type="entry name" value="S4"/>
    <property type="match status" value="1"/>
</dbReference>
<proteinExistence type="inferred from homology"/>
<protein>
    <recommendedName>
        <fullName evidence="1">Tyrosine--tRNA ligase</fullName>
        <ecNumber evidence="1">6.1.1.1</ecNumber>
    </recommendedName>
    <alternativeName>
        <fullName evidence="1">Tyrosyl-tRNA synthetase</fullName>
        <shortName evidence="1">TyrRS</shortName>
    </alternativeName>
</protein>
<accession>Q9ZCZ4</accession>
<keyword id="KW-0030">Aminoacyl-tRNA synthetase</keyword>
<keyword id="KW-0067">ATP-binding</keyword>
<keyword id="KW-0963">Cytoplasm</keyword>
<keyword id="KW-0436">Ligase</keyword>
<keyword id="KW-0547">Nucleotide-binding</keyword>
<keyword id="KW-0648">Protein biosynthesis</keyword>
<keyword id="KW-1185">Reference proteome</keyword>
<keyword id="KW-0694">RNA-binding</keyword>